<sequence>MRRINTIMQGKTNGGNGPESGTVVVTRTQPKTRKPSLYRVLLLNDDYTPMEFVVHVLQRFFQKNLDDATRIMLHVHNHGVGECGVFTYEVAETKVSQVMDFARQNQHPLQCVMEKK</sequence>
<organism>
    <name type="scientific">Brucella suis biovar 1 (strain 1330)</name>
    <dbReference type="NCBI Taxonomy" id="204722"/>
    <lineage>
        <taxon>Bacteria</taxon>
        <taxon>Pseudomonadati</taxon>
        <taxon>Pseudomonadota</taxon>
        <taxon>Alphaproteobacteria</taxon>
        <taxon>Hyphomicrobiales</taxon>
        <taxon>Brucellaceae</taxon>
        <taxon>Brucella/Ochrobactrum group</taxon>
        <taxon>Brucella</taxon>
    </lineage>
</organism>
<name>CLPS_BRUSU</name>
<proteinExistence type="inferred from homology"/>
<evidence type="ECO:0000255" key="1">
    <source>
        <dbReference type="HAMAP-Rule" id="MF_00302"/>
    </source>
</evidence>
<evidence type="ECO:0000256" key="2">
    <source>
        <dbReference type="SAM" id="MobiDB-lite"/>
    </source>
</evidence>
<evidence type="ECO:0000305" key="3"/>
<reference key="1">
    <citation type="journal article" date="2002" name="Proc. Natl. Acad. Sci. U.S.A.">
        <title>The Brucella suis genome reveals fundamental similarities between animal and plant pathogens and symbionts.</title>
        <authorList>
            <person name="Paulsen I.T."/>
            <person name="Seshadri R."/>
            <person name="Nelson K.E."/>
            <person name="Eisen J.A."/>
            <person name="Heidelberg J.F."/>
            <person name="Read T.D."/>
            <person name="Dodson R.J."/>
            <person name="Umayam L.A."/>
            <person name="Brinkac L.M."/>
            <person name="Beanan M.J."/>
            <person name="Daugherty S.C."/>
            <person name="DeBoy R.T."/>
            <person name="Durkin A.S."/>
            <person name="Kolonay J.F."/>
            <person name="Madupu R."/>
            <person name="Nelson W.C."/>
            <person name="Ayodeji B."/>
            <person name="Kraul M."/>
            <person name="Shetty J."/>
            <person name="Malek J.A."/>
            <person name="Van Aken S.E."/>
            <person name="Riedmuller S."/>
            <person name="Tettelin H."/>
            <person name="Gill S.R."/>
            <person name="White O."/>
            <person name="Salzberg S.L."/>
            <person name="Hoover D.L."/>
            <person name="Lindler L.E."/>
            <person name="Halling S.M."/>
            <person name="Boyle S.M."/>
            <person name="Fraser C.M."/>
        </authorList>
    </citation>
    <scope>NUCLEOTIDE SEQUENCE [LARGE SCALE GENOMIC DNA]</scope>
    <source>
        <strain>1330</strain>
    </source>
</reference>
<reference key="2">
    <citation type="journal article" date="2011" name="J. Bacteriol.">
        <title>Revised genome sequence of Brucella suis 1330.</title>
        <authorList>
            <person name="Tae H."/>
            <person name="Shallom S."/>
            <person name="Settlage R."/>
            <person name="Preston D."/>
            <person name="Adams L.G."/>
            <person name="Garner H.R."/>
        </authorList>
    </citation>
    <scope>NUCLEOTIDE SEQUENCE [LARGE SCALE GENOMIC DNA]</scope>
    <source>
        <strain>1330</strain>
    </source>
</reference>
<accession>Q8G0C9</accession>
<accession>G0KA92</accession>
<feature type="chain" id="PRO_0000215693" description="ATP-dependent Clp protease adapter protein ClpS">
    <location>
        <begin position="1"/>
        <end position="116"/>
    </location>
</feature>
<feature type="region of interest" description="Disordered" evidence="2">
    <location>
        <begin position="1"/>
        <end position="23"/>
    </location>
</feature>
<feature type="compositionally biased region" description="Polar residues" evidence="2">
    <location>
        <begin position="1"/>
        <end position="11"/>
    </location>
</feature>
<comment type="function">
    <text evidence="1">Involved in the modulation of the specificity of the ClpAP-mediated ATP-dependent protein degradation.</text>
</comment>
<comment type="subunit">
    <text evidence="1">Binds to the N-terminal domain of the chaperone ClpA.</text>
</comment>
<comment type="similarity">
    <text evidence="1">Belongs to the ClpS family.</text>
</comment>
<comment type="sequence caution" evidence="3">
    <conflict type="erroneous initiation">
        <sequence resource="EMBL-CDS" id="AEM18508"/>
    </conflict>
    <text>Extended N-terminus.</text>
</comment>
<dbReference type="EMBL" id="AE014291">
    <property type="protein sequence ID" value="AAN30090.1"/>
    <property type="molecule type" value="Genomic_DNA"/>
</dbReference>
<dbReference type="EMBL" id="CP002997">
    <property type="protein sequence ID" value="AEM18508.1"/>
    <property type="status" value="ALT_INIT"/>
    <property type="molecule type" value="Genomic_DNA"/>
</dbReference>
<dbReference type="RefSeq" id="WP_002964297.1">
    <property type="nucleotide sequence ID" value="NZ_KN046804.1"/>
</dbReference>
<dbReference type="SMR" id="Q8G0C9"/>
<dbReference type="GeneID" id="97533580"/>
<dbReference type="KEGG" id="bms:BR1170"/>
<dbReference type="KEGG" id="bsi:BS1330_I1166"/>
<dbReference type="HOGENOM" id="CLU_134358_0_0_5"/>
<dbReference type="PhylomeDB" id="Q8G0C9"/>
<dbReference type="Proteomes" id="UP000007104">
    <property type="component" value="Chromosome I"/>
</dbReference>
<dbReference type="GO" id="GO:0030163">
    <property type="term" value="P:protein catabolic process"/>
    <property type="evidence" value="ECO:0007669"/>
    <property type="project" value="InterPro"/>
</dbReference>
<dbReference type="GO" id="GO:0006508">
    <property type="term" value="P:proteolysis"/>
    <property type="evidence" value="ECO:0007669"/>
    <property type="project" value="UniProtKB-UniRule"/>
</dbReference>
<dbReference type="FunFam" id="3.30.1390.10:FF:000002">
    <property type="entry name" value="ATP-dependent Clp protease adapter protein ClpS"/>
    <property type="match status" value="1"/>
</dbReference>
<dbReference type="Gene3D" id="3.30.1390.10">
    <property type="match status" value="1"/>
</dbReference>
<dbReference type="HAMAP" id="MF_00302">
    <property type="entry name" value="ClpS"/>
    <property type="match status" value="1"/>
</dbReference>
<dbReference type="InterPro" id="IPR022935">
    <property type="entry name" value="ClpS"/>
</dbReference>
<dbReference type="InterPro" id="IPR003769">
    <property type="entry name" value="ClpS_core"/>
</dbReference>
<dbReference type="InterPro" id="IPR014719">
    <property type="entry name" value="Ribosomal_bL12_C/ClpS-like"/>
</dbReference>
<dbReference type="NCBIfam" id="NF000669">
    <property type="entry name" value="PRK00033.1-2"/>
    <property type="match status" value="1"/>
</dbReference>
<dbReference type="NCBIfam" id="NF000672">
    <property type="entry name" value="PRK00033.1-5"/>
    <property type="match status" value="1"/>
</dbReference>
<dbReference type="PANTHER" id="PTHR33473:SF19">
    <property type="entry name" value="ATP-DEPENDENT CLP PROTEASE ADAPTER PROTEIN CLPS"/>
    <property type="match status" value="1"/>
</dbReference>
<dbReference type="PANTHER" id="PTHR33473">
    <property type="entry name" value="ATP-DEPENDENT CLP PROTEASE ADAPTER PROTEIN CLPS1, CHLOROPLASTIC"/>
    <property type="match status" value="1"/>
</dbReference>
<dbReference type="Pfam" id="PF02617">
    <property type="entry name" value="ClpS"/>
    <property type="match status" value="1"/>
</dbReference>
<dbReference type="SUPFAM" id="SSF54736">
    <property type="entry name" value="ClpS-like"/>
    <property type="match status" value="1"/>
</dbReference>
<protein>
    <recommendedName>
        <fullName evidence="1">ATP-dependent Clp protease adapter protein ClpS</fullName>
    </recommendedName>
</protein>
<gene>
    <name evidence="1" type="primary">clpS</name>
    <name type="ordered locus">BR1170</name>
    <name type="ordered locus">BS1330_I1166</name>
</gene>